<evidence type="ECO:0000255" key="1">
    <source>
        <dbReference type="HAMAP-Rule" id="MF_00675"/>
    </source>
</evidence>
<sequence length="470" mass="53610">MATFMTEDFLLKNDIARTLYHKYAAPMPIYDFHCHLSPQEIADDRRFDNLGQIWLEGDHYKWRALRSAGVDESLITGKETSDYEKYMAWANTVPKTLGNPLYHWTHLELRRPFGITGTLFGPDTAESIWTQCNEKLATPAFSARGIMQQMNVRMVGTTDDPIDSLEYHRQIAADDSIDIEVAPSWRPDKVFKIELDGFVDYLRKLEAAADVSITRFDDLRQALTRRLDHFAACGCRASDHGIETLRFAPVPDDAQLDAILGKRLAGETLSELEIAQFTTAVLVWLGRQYAARGWVMQLHIGAIRNNNTRMFRLLGPDTGFDSIGDNNISWALSRLLDSMDVTNELPKTILYCLNPRDNEVLATMIGNFQGPGIAGKVQFGSGWWFNDQKDGMLRQLEQLSQMGLLSQFVGMLTDSRSFLSYTRHEYFRRILCNLLGQWAQDGEIPDDEAMLSRMVQDICFNNAQRYFTIK</sequence>
<comment type="catalytic activity">
    <reaction evidence="1">
        <text>D-glucuronate = D-fructuronate</text>
        <dbReference type="Rhea" id="RHEA:13049"/>
        <dbReference type="ChEBI" id="CHEBI:58720"/>
        <dbReference type="ChEBI" id="CHEBI:59863"/>
        <dbReference type="EC" id="5.3.1.12"/>
    </reaction>
</comment>
<comment type="catalytic activity">
    <reaction evidence="1">
        <text>aldehydo-D-galacturonate = keto-D-tagaturonate</text>
        <dbReference type="Rhea" id="RHEA:27702"/>
        <dbReference type="ChEBI" id="CHEBI:12952"/>
        <dbReference type="ChEBI" id="CHEBI:17886"/>
        <dbReference type="EC" id="5.3.1.12"/>
    </reaction>
</comment>
<comment type="pathway">
    <text evidence="1">Carbohydrate metabolism; pentose and glucuronate interconversion.</text>
</comment>
<comment type="similarity">
    <text evidence="1">Belongs to the metallo-dependent hydrolases superfamily. Uronate isomerase family.</text>
</comment>
<organism>
    <name type="scientific">Salmonella gallinarum (strain 287/91 / NCTC 13346)</name>
    <dbReference type="NCBI Taxonomy" id="550538"/>
    <lineage>
        <taxon>Bacteria</taxon>
        <taxon>Pseudomonadati</taxon>
        <taxon>Pseudomonadota</taxon>
        <taxon>Gammaproteobacteria</taxon>
        <taxon>Enterobacterales</taxon>
        <taxon>Enterobacteriaceae</taxon>
        <taxon>Salmonella</taxon>
    </lineage>
</organism>
<reference key="1">
    <citation type="journal article" date="2008" name="Genome Res.">
        <title>Comparative genome analysis of Salmonella enteritidis PT4 and Salmonella gallinarum 287/91 provides insights into evolutionary and host adaptation pathways.</title>
        <authorList>
            <person name="Thomson N.R."/>
            <person name="Clayton D.J."/>
            <person name="Windhorst D."/>
            <person name="Vernikos G."/>
            <person name="Davidson S."/>
            <person name="Churcher C."/>
            <person name="Quail M.A."/>
            <person name="Stevens M."/>
            <person name="Jones M.A."/>
            <person name="Watson M."/>
            <person name="Barron A."/>
            <person name="Layton A."/>
            <person name="Pickard D."/>
            <person name="Kingsley R.A."/>
            <person name="Bignell A."/>
            <person name="Clark L."/>
            <person name="Harris B."/>
            <person name="Ormond D."/>
            <person name="Abdellah Z."/>
            <person name="Brooks K."/>
            <person name="Cherevach I."/>
            <person name="Chillingworth T."/>
            <person name="Woodward J."/>
            <person name="Norberczak H."/>
            <person name="Lord A."/>
            <person name="Arrowsmith C."/>
            <person name="Jagels K."/>
            <person name="Moule S."/>
            <person name="Mungall K."/>
            <person name="Saunders M."/>
            <person name="Whitehead S."/>
            <person name="Chabalgoity J.A."/>
            <person name="Maskell D."/>
            <person name="Humphreys T."/>
            <person name="Roberts M."/>
            <person name="Barrow P.A."/>
            <person name="Dougan G."/>
            <person name="Parkhill J."/>
        </authorList>
    </citation>
    <scope>NUCLEOTIDE SEQUENCE [LARGE SCALE GENOMIC DNA]</scope>
    <source>
        <strain>287/91 / NCTC 13346</strain>
    </source>
</reference>
<protein>
    <recommendedName>
        <fullName evidence="1">Uronate isomerase</fullName>
        <ecNumber evidence="1">5.3.1.12</ecNumber>
    </recommendedName>
    <alternativeName>
        <fullName evidence="1">Glucuronate isomerase</fullName>
    </alternativeName>
    <alternativeName>
        <fullName evidence="1">Uronic isomerase</fullName>
    </alternativeName>
</protein>
<keyword id="KW-0413">Isomerase</keyword>
<name>UXAC_SALG2</name>
<accession>B5RE96</accession>
<feature type="chain" id="PRO_1000131603" description="Uronate isomerase">
    <location>
        <begin position="1"/>
        <end position="470"/>
    </location>
</feature>
<dbReference type="EC" id="5.3.1.12" evidence="1"/>
<dbReference type="EMBL" id="AM933173">
    <property type="protein sequence ID" value="CAR38835.1"/>
    <property type="molecule type" value="Genomic_DNA"/>
</dbReference>
<dbReference type="RefSeq" id="WP_000190182.1">
    <property type="nucleotide sequence ID" value="NC_011274.1"/>
</dbReference>
<dbReference type="SMR" id="B5RE96"/>
<dbReference type="KEGG" id="seg:SG3031"/>
<dbReference type="HOGENOM" id="CLU_044465_1_0_6"/>
<dbReference type="UniPathway" id="UPA00246"/>
<dbReference type="Proteomes" id="UP000008321">
    <property type="component" value="Chromosome"/>
</dbReference>
<dbReference type="GO" id="GO:0008880">
    <property type="term" value="F:glucuronate isomerase activity"/>
    <property type="evidence" value="ECO:0007669"/>
    <property type="project" value="UniProtKB-UniRule"/>
</dbReference>
<dbReference type="GO" id="GO:0019698">
    <property type="term" value="P:D-galacturonate catabolic process"/>
    <property type="evidence" value="ECO:0007669"/>
    <property type="project" value="TreeGrafter"/>
</dbReference>
<dbReference type="GO" id="GO:0042840">
    <property type="term" value="P:D-glucuronate catabolic process"/>
    <property type="evidence" value="ECO:0007669"/>
    <property type="project" value="TreeGrafter"/>
</dbReference>
<dbReference type="Gene3D" id="3.20.20.140">
    <property type="entry name" value="Metal-dependent hydrolases"/>
    <property type="match status" value="1"/>
</dbReference>
<dbReference type="Gene3D" id="1.10.2020.10">
    <property type="entry name" value="uronate isomerase, domain 2, chain A"/>
    <property type="match status" value="1"/>
</dbReference>
<dbReference type="HAMAP" id="MF_00675">
    <property type="entry name" value="UxaC"/>
    <property type="match status" value="1"/>
</dbReference>
<dbReference type="InterPro" id="IPR032466">
    <property type="entry name" value="Metal_Hydrolase"/>
</dbReference>
<dbReference type="InterPro" id="IPR003766">
    <property type="entry name" value="Uronate_isomerase"/>
</dbReference>
<dbReference type="NCBIfam" id="NF002794">
    <property type="entry name" value="PRK02925.1"/>
    <property type="match status" value="1"/>
</dbReference>
<dbReference type="PANTHER" id="PTHR30068">
    <property type="entry name" value="URONATE ISOMERASE"/>
    <property type="match status" value="1"/>
</dbReference>
<dbReference type="PANTHER" id="PTHR30068:SF4">
    <property type="entry name" value="URONATE ISOMERASE"/>
    <property type="match status" value="1"/>
</dbReference>
<dbReference type="Pfam" id="PF02614">
    <property type="entry name" value="UxaC"/>
    <property type="match status" value="1"/>
</dbReference>
<dbReference type="SUPFAM" id="SSF51556">
    <property type="entry name" value="Metallo-dependent hydrolases"/>
    <property type="match status" value="1"/>
</dbReference>
<gene>
    <name evidence="1" type="primary">uxaC</name>
    <name type="ordered locus">SG3031</name>
</gene>
<proteinExistence type="inferred from homology"/>